<evidence type="ECO:0000255" key="1">
    <source>
        <dbReference type="HAMAP-Rule" id="MF_00652"/>
    </source>
</evidence>
<accession>A0KZZ8</accession>
<gene>
    <name type="ordered locus">Shewana3_3143</name>
</gene>
<comment type="similarity">
    <text evidence="1">Belongs to the UPF0246 family.</text>
</comment>
<feature type="chain" id="PRO_1000061637" description="UPF0246 protein Shewana3_3143">
    <location>
        <begin position="1"/>
        <end position="257"/>
    </location>
</feature>
<organism>
    <name type="scientific">Shewanella sp. (strain ANA-3)</name>
    <dbReference type="NCBI Taxonomy" id="94122"/>
    <lineage>
        <taxon>Bacteria</taxon>
        <taxon>Pseudomonadati</taxon>
        <taxon>Pseudomonadota</taxon>
        <taxon>Gammaproteobacteria</taxon>
        <taxon>Alteromonadales</taxon>
        <taxon>Shewanellaceae</taxon>
        <taxon>Shewanella</taxon>
    </lineage>
</organism>
<proteinExistence type="inferred from homology"/>
<dbReference type="EMBL" id="CP000469">
    <property type="protein sequence ID" value="ABK49367.1"/>
    <property type="molecule type" value="Genomic_DNA"/>
</dbReference>
<dbReference type="RefSeq" id="WP_011717968.1">
    <property type="nucleotide sequence ID" value="NC_008577.1"/>
</dbReference>
<dbReference type="SMR" id="A0KZZ8"/>
<dbReference type="STRING" id="94122.Shewana3_3143"/>
<dbReference type="KEGG" id="shn:Shewana3_3143"/>
<dbReference type="eggNOG" id="COG3022">
    <property type="taxonomic scope" value="Bacteria"/>
</dbReference>
<dbReference type="HOGENOM" id="CLU_061989_0_0_6"/>
<dbReference type="OrthoDB" id="9777133at2"/>
<dbReference type="Proteomes" id="UP000002589">
    <property type="component" value="Chromosome"/>
</dbReference>
<dbReference type="GO" id="GO:0005829">
    <property type="term" value="C:cytosol"/>
    <property type="evidence" value="ECO:0007669"/>
    <property type="project" value="TreeGrafter"/>
</dbReference>
<dbReference type="GO" id="GO:0033194">
    <property type="term" value="P:response to hydroperoxide"/>
    <property type="evidence" value="ECO:0007669"/>
    <property type="project" value="TreeGrafter"/>
</dbReference>
<dbReference type="HAMAP" id="MF_00652">
    <property type="entry name" value="UPF0246"/>
    <property type="match status" value="1"/>
</dbReference>
<dbReference type="InterPro" id="IPR005583">
    <property type="entry name" value="YaaA"/>
</dbReference>
<dbReference type="NCBIfam" id="NF002541">
    <property type="entry name" value="PRK02101.1-1"/>
    <property type="match status" value="1"/>
</dbReference>
<dbReference type="NCBIfam" id="NF002542">
    <property type="entry name" value="PRK02101.1-3"/>
    <property type="match status" value="1"/>
</dbReference>
<dbReference type="PANTHER" id="PTHR30283:SF4">
    <property type="entry name" value="PEROXIDE STRESS RESISTANCE PROTEIN YAAA"/>
    <property type="match status" value="1"/>
</dbReference>
<dbReference type="PANTHER" id="PTHR30283">
    <property type="entry name" value="PEROXIDE STRESS RESPONSE PROTEIN YAAA"/>
    <property type="match status" value="1"/>
</dbReference>
<dbReference type="Pfam" id="PF03883">
    <property type="entry name" value="H2O2_YaaD"/>
    <property type="match status" value="1"/>
</dbReference>
<protein>
    <recommendedName>
        <fullName evidence="1">UPF0246 protein Shewana3_3143</fullName>
    </recommendedName>
</protein>
<sequence>MLILVSPAKTLDFEQPPLTQTHTRPDFLAYSQELIQVCQRLTPSDIATLMKVSDNIAGLNAARFGEWTPDYSIDNAKQAIFAFRGDVYTGFDADTLTPEQLERTQSQLRILSGLYGLLRPLDLILPYRLEMGTALANPKGKNLYDFWGNTLTEAVNNAVAAQGDDIIINLASNEYFKAIKRKQLAGQLITPVFKDFKNGQYKVISFFAKKARGMMARYIIDQQVSSIEELKAFDVAGYYYSEELSKPNEPTFLREAQ</sequence>
<reference key="1">
    <citation type="submission" date="2006-09" db="EMBL/GenBank/DDBJ databases">
        <title>Complete sequence of chromosome 1 of Shewanella sp. ANA-3.</title>
        <authorList>
            <person name="Copeland A."/>
            <person name="Lucas S."/>
            <person name="Lapidus A."/>
            <person name="Barry K."/>
            <person name="Detter J.C."/>
            <person name="Glavina del Rio T."/>
            <person name="Hammon N."/>
            <person name="Israni S."/>
            <person name="Dalin E."/>
            <person name="Tice H."/>
            <person name="Pitluck S."/>
            <person name="Chertkov O."/>
            <person name="Brettin T."/>
            <person name="Bruce D."/>
            <person name="Han C."/>
            <person name="Tapia R."/>
            <person name="Gilna P."/>
            <person name="Schmutz J."/>
            <person name="Larimer F."/>
            <person name="Land M."/>
            <person name="Hauser L."/>
            <person name="Kyrpides N."/>
            <person name="Kim E."/>
            <person name="Newman D."/>
            <person name="Salticov C."/>
            <person name="Konstantinidis K."/>
            <person name="Klappenback J."/>
            <person name="Tiedje J."/>
            <person name="Richardson P."/>
        </authorList>
    </citation>
    <scope>NUCLEOTIDE SEQUENCE [LARGE SCALE GENOMIC DNA]</scope>
    <source>
        <strain>ANA-3</strain>
    </source>
</reference>
<name>Y3143_SHESA</name>